<comment type="function">
    <text evidence="1">Catalyzes the condensation of pantoate with beta-alanine in an ATP-dependent reaction via a pantoyl-adenylate intermediate.</text>
</comment>
<comment type="catalytic activity">
    <reaction evidence="1">
        <text>(R)-pantoate + beta-alanine + ATP = (R)-pantothenate + AMP + diphosphate + H(+)</text>
        <dbReference type="Rhea" id="RHEA:10912"/>
        <dbReference type="ChEBI" id="CHEBI:15378"/>
        <dbReference type="ChEBI" id="CHEBI:15980"/>
        <dbReference type="ChEBI" id="CHEBI:29032"/>
        <dbReference type="ChEBI" id="CHEBI:30616"/>
        <dbReference type="ChEBI" id="CHEBI:33019"/>
        <dbReference type="ChEBI" id="CHEBI:57966"/>
        <dbReference type="ChEBI" id="CHEBI:456215"/>
        <dbReference type="EC" id="6.3.2.1"/>
    </reaction>
</comment>
<comment type="pathway">
    <text evidence="1">Cofactor biosynthesis; (R)-pantothenate biosynthesis; (R)-pantothenate from (R)-pantoate and beta-alanine: step 1/1.</text>
</comment>
<comment type="subunit">
    <text evidence="1">Homodimer.</text>
</comment>
<comment type="subcellular location">
    <subcellularLocation>
        <location evidence="1">Cytoplasm</location>
    </subcellularLocation>
</comment>
<comment type="miscellaneous">
    <text evidence="1">The reaction proceeds by a bi uni uni bi ping pong mechanism.</text>
</comment>
<comment type="similarity">
    <text evidence="1">Belongs to the pantothenate synthetase family.</text>
</comment>
<sequence>MQTFAEISALREQIKTFKREGRRIAFVPTMGNLHEGHLTLVRKAREHADIVVVSIFVNPMQFDRADDLNNYPRTLEDDLSKLNGEAVELVFTPTPEMIYPEGLDKQTLVEVPSLSTMLEGASRPGHFRGVATVVTKLFNIVQPDVACFGEKDFQQLAIIRKMTTDLAMDIEIIGVPTVREMDGLAMSSRNGLLTIDERQRAPVLARTMRWISSAIRGGRDDFASIIEDASDQLRAAGLHPDEIFIRDARTLQAVNTESTQAVILMSAFLGKARLIDNQVVELVKDSKEEVDSIESESENSH</sequence>
<keyword id="KW-0067">ATP-binding</keyword>
<keyword id="KW-0963">Cytoplasm</keyword>
<keyword id="KW-0436">Ligase</keyword>
<keyword id="KW-0547">Nucleotide-binding</keyword>
<keyword id="KW-0566">Pantothenate biosynthesis</keyword>
<gene>
    <name evidence="1" type="primary">panC</name>
    <name type="ordered locus">VV2764</name>
</gene>
<dbReference type="EC" id="6.3.2.1" evidence="1"/>
<dbReference type="EMBL" id="BA000037">
    <property type="protein sequence ID" value="BAC95528.1"/>
    <property type="molecule type" value="Genomic_DNA"/>
</dbReference>
<dbReference type="RefSeq" id="WP_011151119.1">
    <property type="nucleotide sequence ID" value="NC_005139.1"/>
</dbReference>
<dbReference type="SMR" id="Q7MHV3"/>
<dbReference type="STRING" id="672.VV93_v1c24760"/>
<dbReference type="KEGG" id="vvy:VV2764"/>
<dbReference type="PATRIC" id="fig|196600.6.peg.2757"/>
<dbReference type="eggNOG" id="COG0414">
    <property type="taxonomic scope" value="Bacteria"/>
</dbReference>
<dbReference type="HOGENOM" id="CLU_047148_0_0_6"/>
<dbReference type="UniPathway" id="UPA00028">
    <property type="reaction ID" value="UER00005"/>
</dbReference>
<dbReference type="Proteomes" id="UP000002675">
    <property type="component" value="Chromosome I"/>
</dbReference>
<dbReference type="GO" id="GO:0005829">
    <property type="term" value="C:cytosol"/>
    <property type="evidence" value="ECO:0007669"/>
    <property type="project" value="TreeGrafter"/>
</dbReference>
<dbReference type="GO" id="GO:0005524">
    <property type="term" value="F:ATP binding"/>
    <property type="evidence" value="ECO:0007669"/>
    <property type="project" value="UniProtKB-KW"/>
</dbReference>
<dbReference type="GO" id="GO:0004592">
    <property type="term" value="F:pantoate-beta-alanine ligase activity"/>
    <property type="evidence" value="ECO:0007669"/>
    <property type="project" value="UniProtKB-UniRule"/>
</dbReference>
<dbReference type="GO" id="GO:0015940">
    <property type="term" value="P:pantothenate biosynthetic process"/>
    <property type="evidence" value="ECO:0007669"/>
    <property type="project" value="UniProtKB-UniRule"/>
</dbReference>
<dbReference type="CDD" id="cd00560">
    <property type="entry name" value="PanC"/>
    <property type="match status" value="1"/>
</dbReference>
<dbReference type="FunFam" id="3.40.50.620:FF:000013">
    <property type="entry name" value="Pantothenate synthetase"/>
    <property type="match status" value="1"/>
</dbReference>
<dbReference type="Gene3D" id="3.40.50.620">
    <property type="entry name" value="HUPs"/>
    <property type="match status" value="1"/>
</dbReference>
<dbReference type="Gene3D" id="3.30.1300.10">
    <property type="entry name" value="Pantoate-beta-alanine ligase, C-terminal domain"/>
    <property type="match status" value="1"/>
</dbReference>
<dbReference type="HAMAP" id="MF_00158">
    <property type="entry name" value="PanC"/>
    <property type="match status" value="1"/>
</dbReference>
<dbReference type="InterPro" id="IPR004821">
    <property type="entry name" value="Cyt_trans-like"/>
</dbReference>
<dbReference type="InterPro" id="IPR003721">
    <property type="entry name" value="Pantoate_ligase"/>
</dbReference>
<dbReference type="InterPro" id="IPR042176">
    <property type="entry name" value="Pantoate_ligase_C"/>
</dbReference>
<dbReference type="InterPro" id="IPR014729">
    <property type="entry name" value="Rossmann-like_a/b/a_fold"/>
</dbReference>
<dbReference type="NCBIfam" id="TIGR00125">
    <property type="entry name" value="cyt_tran_rel"/>
    <property type="match status" value="1"/>
</dbReference>
<dbReference type="NCBIfam" id="TIGR00018">
    <property type="entry name" value="panC"/>
    <property type="match status" value="1"/>
</dbReference>
<dbReference type="PANTHER" id="PTHR21299">
    <property type="entry name" value="CYTIDYLATE KINASE/PANTOATE-BETA-ALANINE LIGASE"/>
    <property type="match status" value="1"/>
</dbReference>
<dbReference type="PANTHER" id="PTHR21299:SF1">
    <property type="entry name" value="PANTOATE--BETA-ALANINE LIGASE"/>
    <property type="match status" value="1"/>
</dbReference>
<dbReference type="Pfam" id="PF02569">
    <property type="entry name" value="Pantoate_ligase"/>
    <property type="match status" value="1"/>
</dbReference>
<dbReference type="SUPFAM" id="SSF52374">
    <property type="entry name" value="Nucleotidylyl transferase"/>
    <property type="match status" value="1"/>
</dbReference>
<organism>
    <name type="scientific">Vibrio vulnificus (strain YJ016)</name>
    <dbReference type="NCBI Taxonomy" id="196600"/>
    <lineage>
        <taxon>Bacteria</taxon>
        <taxon>Pseudomonadati</taxon>
        <taxon>Pseudomonadota</taxon>
        <taxon>Gammaproteobacteria</taxon>
        <taxon>Vibrionales</taxon>
        <taxon>Vibrionaceae</taxon>
        <taxon>Vibrio</taxon>
    </lineage>
</organism>
<name>PANC_VIBVY</name>
<evidence type="ECO:0000255" key="1">
    <source>
        <dbReference type="HAMAP-Rule" id="MF_00158"/>
    </source>
</evidence>
<reference key="1">
    <citation type="journal article" date="2003" name="Genome Res.">
        <title>Comparative genome analysis of Vibrio vulnificus, a marine pathogen.</title>
        <authorList>
            <person name="Chen C.-Y."/>
            <person name="Wu K.-M."/>
            <person name="Chang Y.-C."/>
            <person name="Chang C.-H."/>
            <person name="Tsai H.-C."/>
            <person name="Liao T.-L."/>
            <person name="Liu Y.-M."/>
            <person name="Chen H.-J."/>
            <person name="Shen A.B.-T."/>
            <person name="Li J.-C."/>
            <person name="Su T.-L."/>
            <person name="Shao C.-P."/>
            <person name="Lee C.-T."/>
            <person name="Hor L.-I."/>
            <person name="Tsai S.-F."/>
        </authorList>
    </citation>
    <scope>NUCLEOTIDE SEQUENCE [LARGE SCALE GENOMIC DNA]</scope>
    <source>
        <strain>YJ016</strain>
    </source>
</reference>
<proteinExistence type="inferred from homology"/>
<feature type="chain" id="PRO_0000128288" description="Pantothenate synthetase">
    <location>
        <begin position="1"/>
        <end position="301"/>
    </location>
</feature>
<feature type="active site" description="Proton donor" evidence="1">
    <location>
        <position position="37"/>
    </location>
</feature>
<feature type="binding site" evidence="1">
    <location>
        <begin position="30"/>
        <end position="37"/>
    </location>
    <ligand>
        <name>ATP</name>
        <dbReference type="ChEBI" id="CHEBI:30616"/>
    </ligand>
</feature>
<feature type="binding site" evidence="1">
    <location>
        <position position="61"/>
    </location>
    <ligand>
        <name>(R)-pantoate</name>
        <dbReference type="ChEBI" id="CHEBI:15980"/>
    </ligand>
</feature>
<feature type="binding site" evidence="1">
    <location>
        <position position="61"/>
    </location>
    <ligand>
        <name>beta-alanine</name>
        <dbReference type="ChEBI" id="CHEBI:57966"/>
    </ligand>
</feature>
<feature type="binding site" evidence="1">
    <location>
        <begin position="149"/>
        <end position="152"/>
    </location>
    <ligand>
        <name>ATP</name>
        <dbReference type="ChEBI" id="CHEBI:30616"/>
    </ligand>
</feature>
<feature type="binding site" evidence="1">
    <location>
        <position position="155"/>
    </location>
    <ligand>
        <name>(R)-pantoate</name>
        <dbReference type="ChEBI" id="CHEBI:15980"/>
    </ligand>
</feature>
<feature type="binding site" evidence="1">
    <location>
        <position position="178"/>
    </location>
    <ligand>
        <name>ATP</name>
        <dbReference type="ChEBI" id="CHEBI:30616"/>
    </ligand>
</feature>
<feature type="binding site" evidence="1">
    <location>
        <begin position="186"/>
        <end position="189"/>
    </location>
    <ligand>
        <name>ATP</name>
        <dbReference type="ChEBI" id="CHEBI:30616"/>
    </ligand>
</feature>
<protein>
    <recommendedName>
        <fullName evidence="1">Pantothenate synthetase</fullName>
        <shortName evidence="1">PS</shortName>
        <ecNumber evidence="1">6.3.2.1</ecNumber>
    </recommendedName>
    <alternativeName>
        <fullName evidence="1">Pantoate--beta-alanine ligase</fullName>
    </alternativeName>
    <alternativeName>
        <fullName evidence="1">Pantoate-activating enzyme</fullName>
    </alternativeName>
</protein>
<accession>Q7MHV3</accession>